<gene>
    <name evidence="2" type="primary">RNF8</name>
</gene>
<feature type="chain" id="PRO_0000301677" description="E3 ubiquitin-protein ligase RNF8">
    <location>
        <begin position="1"/>
        <end position="486"/>
    </location>
</feature>
<feature type="domain" description="FHA" evidence="2">
    <location>
        <begin position="38"/>
        <end position="92"/>
    </location>
</feature>
<feature type="zinc finger region" description="RING-type" evidence="2">
    <location>
        <begin position="404"/>
        <end position="442"/>
    </location>
</feature>
<feature type="region of interest" description="Required for interaction with PIWIL1" evidence="2">
    <location>
        <begin position="68"/>
        <end position="72"/>
    </location>
</feature>
<feature type="region of interest" description="Disordered" evidence="3">
    <location>
        <begin position="180"/>
        <end position="207"/>
    </location>
</feature>
<feature type="compositionally biased region" description="Polar residues" evidence="3">
    <location>
        <begin position="180"/>
        <end position="201"/>
    </location>
</feature>
<feature type="modified residue" description="Phosphoserine" evidence="1">
    <location>
        <position position="157"/>
    </location>
</feature>
<evidence type="ECO:0000250" key="1">
    <source>
        <dbReference type="UniProtKB" id="O76064"/>
    </source>
</evidence>
<evidence type="ECO:0000255" key="2">
    <source>
        <dbReference type="HAMAP-Rule" id="MF_03067"/>
    </source>
</evidence>
<evidence type="ECO:0000256" key="3">
    <source>
        <dbReference type="SAM" id="MobiDB-lite"/>
    </source>
</evidence>
<accession>Q5R4I2</accession>
<protein>
    <recommendedName>
        <fullName evidence="2">E3 ubiquitin-protein ligase RNF8</fullName>
        <ecNumber evidence="2">2.3.2.27</ecNumber>
    </recommendedName>
    <alternativeName>
        <fullName evidence="2">RING finger protein 8</fullName>
    </alternativeName>
    <alternativeName>
        <fullName evidence="2">RING-type E3 ubiquitin transferase RNF8</fullName>
    </alternativeName>
</protein>
<reference key="1">
    <citation type="submission" date="2004-11" db="EMBL/GenBank/DDBJ databases">
        <authorList>
            <consortium name="The German cDNA consortium"/>
        </authorList>
    </citation>
    <scope>NUCLEOTIDE SEQUENCE [LARGE SCALE MRNA]</scope>
    <source>
        <tissue>Brain cortex</tissue>
    </source>
</reference>
<sequence>MGEPGFFVTGDRAGGRSWCLRRVGMSAGWLLLEDGCEVTVGRGFGVTYQLVSKICPLMISRNHCVLKQNPEGQWTIMDNKSLNGVWLNRARLEPLSVYSIHQGDYIQLGVPLENKENAEYEYEVTEEDWETIYPCLSPKNDQVIEKNKELRTKRKFSLDELAGPGAEGPSNLKSKINKVSCESGQSVKSQGKGEVSSTPSENLDPKLTVLEPSKKTTGAPIYLGFPKVTEVHHEQTASNSSASQRGLQMFKVTMSRILRLKIQMQEKHEAVMNVKKQTQKGNSKKIVQMEQELLDLQSQLCAEQAQQQARVEQLEKTFQEEEQHLQDLEIAQGEEDLRQQLAQALQEHWALMEELNRSKKDFEAIIQAKNKELEQTKEEKEKVQAQKEEVLSHMNDVLENELQCIICSEYFIEAVTLNCAHSFCSYCINEWMKRKIECPICRKDIKSKTYSLVLDNCINKMVNNLSSEVKERRIVLIRERKVKRLF</sequence>
<comment type="function">
    <text evidence="1 2">E3 ubiquitin-protein ligase that plays a key role in DNA damage signaling via 2 distinct roles: by mediating the 'Lys-63'-linked ubiquitination of histones H2A and H2AX and promoting the recruitment of DNA repair proteins at double-strand breaks (DSBs) sites, and by catalyzing 'Lys-48'-linked ubiquitination to remove target proteins from DNA damage sites. Following DNA DSBs, it is recruited to the sites of damage by ATM-phosphorylated MDC1 and catalyzes the 'Lys-63'-linked ubiquitination of histones H2A and H2AX, thereby promoting the formation of TP53BP1 and BRCA1 ionizing radiation-induced foci (IRIF). Also controls the recruitment of UIMC1-BRCC3 (RAP80-BRCC36) and PAXIP1/PTIP to DNA damage sites. Promotes the recruitment of NBN to DNA damage sites by catalyzing 'Lys-6'-linked ubiquitination of NBN. Also recruited at DNA interstrand cross-links (ICLs) sites and catalyzes 'Lys-63'-linked ubiquitination of histones H2A and H2AX, leading to recruitment of FAAP20 and Fanconi anemia (FA) complex, followed by interstrand cross-link repair. H2A ubiquitination also mediates the ATM-dependent transcriptional silencing at regions flanking DSBs in cis, a mechanism to avoid collision between transcription and repair intermediates. Promotes the formation of 'Lys-63'-linked polyubiquitin chains via interactions with the specific ubiquitin-conjugating UBE2N/UBC13 and ubiquitinates non-histone substrates such as PCNA. Substrates that are polyubiquitinated at 'Lys-63' are usually not targeted for degradation. Also catalyzes the formation of 'Lys-48'-linked polyubiquitin chains via interaction with the ubiquitin-conjugating UBE2L6/UBCH8, leading to degradation of substrate proteins such as CHEK2, JMJD2A/KDM4A and KU80/XRCC5: it is still unclear how the preference toward 'Lys-48'- versus 'Lys-63'-linked ubiquitination is regulated but it could be due to RNF8 ability to interact with specific E2 specific ligases. For instance, interaction with phosphorylated HERC2 promotes the association between RNF8 and UBE2N/UBC13 and favors the specific formation of 'Lys-63'-linked ubiquitin chains. Promotes non-homologous end joining (NHEJ) by promoting the 'Lys-48'-linked ubiquitination and degradation the of KU80/XRCC5. Following DNA damage, mediates the ubiquitination and degradation of JMJD2A/KDM4A in collaboration with RNF168, leading to unmask H4K20me2 mark and promote the recruitment of TP53BP1 at DNA damage sites (By similarity). Following DNA damage, mediates the ubiquitination and degradation of POLD4/p12, a subunit of DNA polymerase delta. In the absence of POLD4, DNA polymerase delta complex exhibits higher proofreading activity (By similarity). In addition to its function in damage signaling, also plays a role in higher-order chromatin structure by mediating extensive chromatin decondensation. Involved in the activation of ATM by promoting histone H2B ubiquitination, which indirectly triggers histone H4 'Lys-16' acetylation (H4K16ac), establishing a chromatin environment that promotes efficient activation of ATM kinase. Required in the testis, where it plays a role in the replacement of histones during spermatogenesis. At uncapped telomeres, promotes the joining of deprotected chromosome ends by inducing H2A ubiquitination and TP53BP1 recruitment, suggesting that it may enhance cancer development by aggravating telomere-induced genome instability in case of telomeric crisis. Promotes the assembly of RAD51 at DNA DSBs in the absence of BRCA1 and TP53BP1 Also involved in class switch recombination in immune system, via its role in regulation of DSBs repair. May be required for proper exit from mitosis after spindle checkpoint activation and may regulate cytokinesis. May play a role in the regulation of RXRA-mediated transcriptional activity. Not involved in RXRA ubiquitination by UBE2E2 (By similarity).</text>
</comment>
<comment type="catalytic activity">
    <reaction evidence="2">
        <text>S-ubiquitinyl-[E2 ubiquitin-conjugating enzyme]-L-cysteine + [acceptor protein]-L-lysine = [E2 ubiquitin-conjugating enzyme]-L-cysteine + N(6)-ubiquitinyl-[acceptor protein]-L-lysine.</text>
        <dbReference type="EC" id="2.3.2.27"/>
    </reaction>
</comment>
<comment type="pathway">
    <text evidence="2">Protein modification; protein ubiquitination.</text>
</comment>
<comment type="subunit">
    <text evidence="2">Homodimer. Forms a E2-E3 ubiquitin ligase complex composed of the RNF8 homodimer and a E2 heterodimer of UBE2N and UBE2V2. Interacts with class III E2s, including UBE2E1, UBE2E2, and UBE2E3 and with UBE2N. Interacts with RXRA. Interacts (via FHA domain) with phosphorylated HERC2 (via C-terminus). Interacts with PIWIL1; leading to sequester RNF8 in the cytoplasm. Interacts with WRAP53/TCAB1.</text>
</comment>
<comment type="subcellular location">
    <subcellularLocation>
        <location evidence="2">Nucleus</location>
    </subcellularLocation>
    <subcellularLocation>
        <location evidence="2">Cytoplasm</location>
    </subcellularLocation>
    <subcellularLocation>
        <location evidence="2">Midbody</location>
    </subcellularLocation>
    <subcellularLocation>
        <location evidence="2">Chromosome</location>
        <location evidence="2">Telomere</location>
    </subcellularLocation>
    <text evidence="2">Recruited at uncapped telomeres. Following DNA double-strand breaks, recruited to the sites of damage. During prophase, concomitant with nuclear envelope breakdown, localizes throughout the cell, with a dotted pattern. In telophase, again in the nucleus and also with a discrete dotted pattern in the cytoplasm. In late telophase and during cytokinesis, localizes in the midbody of the tubulin bridge joining the daughter cells. Does not seem to be associated with condensed chromosomes at any time during the cell cycle. During spermatogenesis, sequestered in the cytoplasm by PIWIL1: RNF8 is released following ubiquitination and degradation of PIWIL1.</text>
</comment>
<comment type="domain">
    <text evidence="1 2">The FHA domain specifically recognizes and binds ATM-phosphorylated MDC1 and phosphorylated HERC2 (By similarity). This domain is also required for proper recruitment to DNA damage sites after UV irradiation, ionizing radiation, or treatment with an alkylating agent (By similarity).</text>
</comment>
<comment type="PTM">
    <text evidence="2">Autoubiquitinated through 'Lys-48' and 'Lys-63' of ubiquitin. 'Lys-63' polyubiquitination is mediated by UBE2N. 'Lys-29'-type polyubiquitination is also observed, but it doesn't require its own functional RING-type zinc finger.</text>
</comment>
<comment type="similarity">
    <text evidence="2">Belongs to the RNF8 family.</text>
</comment>
<comment type="caution">
    <text evidence="2">According to a well-established model, RNF8 initiate H2A 'Lys-63'-linked ubiquitination leading to recruitment of RNF168 to amplify H2A 'Lys-63'-linked ubiquitination. However, other data suggest that RNF168 is the priming ubiquitin ligase by mediating monoubiquitination of 'Lys-13' and 'Lys-15' of nucleosomal histone H2A (H2AK13Ub and H2AK15Ub respectively). These data suggest that RNF168 might be recruited to DSBs sites in a RNF8-dependent manner by binding to non-histone proteins ubiquitinated via 'Lys-63'-linked and initiates monoubiquitination of H2A, which is then amplified by RNF8. Additional evidence is however required to confirm these data.</text>
</comment>
<dbReference type="EC" id="2.3.2.27" evidence="2"/>
<dbReference type="EMBL" id="CR861266">
    <property type="protein sequence ID" value="CAH93334.1"/>
    <property type="molecule type" value="mRNA"/>
</dbReference>
<dbReference type="RefSeq" id="NP_001126963.1">
    <property type="nucleotide sequence ID" value="NM_001133491.1"/>
</dbReference>
<dbReference type="BMRB" id="Q5R4I2"/>
<dbReference type="SMR" id="Q5R4I2"/>
<dbReference type="FunCoup" id="Q5R4I2">
    <property type="interactions" value="2179"/>
</dbReference>
<dbReference type="STRING" id="9601.ENSPPYP00000018524"/>
<dbReference type="GeneID" id="100173982"/>
<dbReference type="KEGG" id="pon:100173982"/>
<dbReference type="CTD" id="9025"/>
<dbReference type="eggNOG" id="KOG3872">
    <property type="taxonomic scope" value="Eukaryota"/>
</dbReference>
<dbReference type="InParanoid" id="Q5R4I2"/>
<dbReference type="OrthoDB" id="5330228at2759"/>
<dbReference type="UniPathway" id="UPA00143"/>
<dbReference type="Proteomes" id="UP000001595">
    <property type="component" value="Unplaced"/>
</dbReference>
<dbReference type="GO" id="GO:0000781">
    <property type="term" value="C:chromosome, telomeric region"/>
    <property type="evidence" value="ECO:0000250"/>
    <property type="project" value="UniProtKB"/>
</dbReference>
<dbReference type="GO" id="GO:0005737">
    <property type="term" value="C:cytoplasm"/>
    <property type="evidence" value="ECO:0000250"/>
    <property type="project" value="UniProtKB"/>
</dbReference>
<dbReference type="GO" id="GO:0005829">
    <property type="term" value="C:cytosol"/>
    <property type="evidence" value="ECO:0007669"/>
    <property type="project" value="TreeGrafter"/>
</dbReference>
<dbReference type="GO" id="GO:0030496">
    <property type="term" value="C:midbody"/>
    <property type="evidence" value="ECO:0007669"/>
    <property type="project" value="UniProtKB-SubCell"/>
</dbReference>
<dbReference type="GO" id="GO:0005634">
    <property type="term" value="C:nucleus"/>
    <property type="evidence" value="ECO:0000250"/>
    <property type="project" value="UniProtKB"/>
</dbReference>
<dbReference type="GO" id="GO:0035861">
    <property type="term" value="C:site of double-strand break"/>
    <property type="evidence" value="ECO:0000250"/>
    <property type="project" value="UniProtKB"/>
</dbReference>
<dbReference type="GO" id="GO:0000151">
    <property type="term" value="C:ubiquitin ligase complex"/>
    <property type="evidence" value="ECO:0000250"/>
    <property type="project" value="UniProtKB"/>
</dbReference>
<dbReference type="GO" id="GO:0003682">
    <property type="term" value="F:chromatin binding"/>
    <property type="evidence" value="ECO:0000250"/>
    <property type="project" value="UniProtKB"/>
</dbReference>
<dbReference type="GO" id="GO:0042393">
    <property type="term" value="F:histone binding"/>
    <property type="evidence" value="ECO:0000250"/>
    <property type="project" value="UniProtKB"/>
</dbReference>
<dbReference type="GO" id="GO:0042803">
    <property type="term" value="F:protein homodimerization activity"/>
    <property type="evidence" value="ECO:0000250"/>
    <property type="project" value="UniProtKB"/>
</dbReference>
<dbReference type="GO" id="GO:0043130">
    <property type="term" value="F:ubiquitin binding"/>
    <property type="evidence" value="ECO:0007669"/>
    <property type="project" value="UniProtKB-UniRule"/>
</dbReference>
<dbReference type="GO" id="GO:0061630">
    <property type="term" value="F:ubiquitin protein ligase activity"/>
    <property type="evidence" value="ECO:0000250"/>
    <property type="project" value="UniProtKB"/>
</dbReference>
<dbReference type="GO" id="GO:0008270">
    <property type="term" value="F:zinc ion binding"/>
    <property type="evidence" value="ECO:0000250"/>
    <property type="project" value="UniProtKB"/>
</dbReference>
<dbReference type="GO" id="GO:0051301">
    <property type="term" value="P:cell division"/>
    <property type="evidence" value="ECO:0007669"/>
    <property type="project" value="UniProtKB-KW"/>
</dbReference>
<dbReference type="GO" id="GO:0006974">
    <property type="term" value="P:DNA damage response"/>
    <property type="evidence" value="ECO:0000250"/>
    <property type="project" value="UniProtKB"/>
</dbReference>
<dbReference type="GO" id="GO:0140861">
    <property type="term" value="P:DNA repair-dependent chromatin remodeling"/>
    <property type="evidence" value="ECO:0000250"/>
    <property type="project" value="UniProtKB"/>
</dbReference>
<dbReference type="GO" id="GO:0006302">
    <property type="term" value="P:double-strand break repair"/>
    <property type="evidence" value="ECO:0000250"/>
    <property type="project" value="UniProtKB"/>
</dbReference>
<dbReference type="GO" id="GO:0006303">
    <property type="term" value="P:double-strand break repair via nonhomologous end joining"/>
    <property type="evidence" value="ECO:0000250"/>
    <property type="project" value="UniProtKB"/>
</dbReference>
<dbReference type="GO" id="GO:0040029">
    <property type="term" value="P:epigenetic regulation of gene expression"/>
    <property type="evidence" value="ECO:0000250"/>
    <property type="project" value="UniProtKB"/>
</dbReference>
<dbReference type="GO" id="GO:0045190">
    <property type="term" value="P:isotype switching"/>
    <property type="evidence" value="ECO:0000250"/>
    <property type="project" value="UniProtKB"/>
</dbReference>
<dbReference type="GO" id="GO:0034244">
    <property type="term" value="P:negative regulation of transcription elongation by RNA polymerase II"/>
    <property type="evidence" value="ECO:0000250"/>
    <property type="project" value="UniProtKB"/>
</dbReference>
<dbReference type="GO" id="GO:0045739">
    <property type="term" value="P:positive regulation of DNA repair"/>
    <property type="evidence" value="ECO:0000250"/>
    <property type="project" value="UniProtKB"/>
</dbReference>
<dbReference type="GO" id="GO:1905168">
    <property type="term" value="P:positive regulation of double-strand break repair via homologous recombination"/>
    <property type="evidence" value="ECO:0000250"/>
    <property type="project" value="UniProtKB"/>
</dbReference>
<dbReference type="GO" id="GO:0070936">
    <property type="term" value="P:protein K48-linked ubiquitination"/>
    <property type="evidence" value="ECO:0000250"/>
    <property type="project" value="UniProtKB"/>
</dbReference>
<dbReference type="GO" id="GO:0085020">
    <property type="term" value="P:protein K6-linked ubiquitination"/>
    <property type="evidence" value="ECO:0000250"/>
    <property type="project" value="UniProtKB"/>
</dbReference>
<dbReference type="GO" id="GO:0070534">
    <property type="term" value="P:protein K63-linked ubiquitination"/>
    <property type="evidence" value="ECO:0000250"/>
    <property type="project" value="UniProtKB"/>
</dbReference>
<dbReference type="GO" id="GO:0010212">
    <property type="term" value="P:response to ionizing radiation"/>
    <property type="evidence" value="ECO:0000250"/>
    <property type="project" value="UniProtKB"/>
</dbReference>
<dbReference type="GO" id="GO:0035092">
    <property type="term" value="P:sperm DNA condensation"/>
    <property type="evidence" value="ECO:0000250"/>
    <property type="project" value="UniProtKB"/>
</dbReference>
<dbReference type="GO" id="GO:0006511">
    <property type="term" value="P:ubiquitin-dependent protein catabolic process"/>
    <property type="evidence" value="ECO:0000250"/>
    <property type="project" value="UniProtKB"/>
</dbReference>
<dbReference type="CDD" id="cd22663">
    <property type="entry name" value="FHA_RNF8"/>
    <property type="match status" value="1"/>
</dbReference>
<dbReference type="CDD" id="cd16535">
    <property type="entry name" value="RING-HC_RNF8"/>
    <property type="match status" value="1"/>
</dbReference>
<dbReference type="FunFam" id="1.20.5.170:FF:000050">
    <property type="entry name" value="E3 ubiquitin-protein ligase RNF8"/>
    <property type="match status" value="1"/>
</dbReference>
<dbReference type="FunFam" id="2.60.200.20:FF:000015">
    <property type="entry name" value="E3 ubiquitin-protein ligase RNF8"/>
    <property type="match status" value="1"/>
</dbReference>
<dbReference type="FunFam" id="3.30.40.10:FF:000242">
    <property type="entry name" value="E3 ubiquitin-protein ligase RNF8"/>
    <property type="match status" value="1"/>
</dbReference>
<dbReference type="Gene3D" id="1.20.5.170">
    <property type="match status" value="1"/>
</dbReference>
<dbReference type="Gene3D" id="2.60.200.20">
    <property type="match status" value="1"/>
</dbReference>
<dbReference type="Gene3D" id="3.30.40.10">
    <property type="entry name" value="Zinc/RING finger domain, C3HC4 (zinc finger)"/>
    <property type="match status" value="1"/>
</dbReference>
<dbReference type="HAMAP" id="MF_03067">
    <property type="entry name" value="RNF8"/>
    <property type="match status" value="1"/>
</dbReference>
<dbReference type="InterPro" id="IPR000253">
    <property type="entry name" value="FHA_dom"/>
</dbReference>
<dbReference type="InterPro" id="IPR017335">
    <property type="entry name" value="RNF8"/>
</dbReference>
<dbReference type="InterPro" id="IPR008984">
    <property type="entry name" value="SMAD_FHA_dom_sf"/>
</dbReference>
<dbReference type="InterPro" id="IPR001841">
    <property type="entry name" value="Znf_RING"/>
</dbReference>
<dbReference type="InterPro" id="IPR013083">
    <property type="entry name" value="Znf_RING/FYVE/PHD"/>
</dbReference>
<dbReference type="InterPro" id="IPR017907">
    <property type="entry name" value="Znf_RING_CS"/>
</dbReference>
<dbReference type="PANTHER" id="PTHR15067">
    <property type="entry name" value="E3 UBIQUITIN-PROTEIN LIGASE RNF8"/>
    <property type="match status" value="1"/>
</dbReference>
<dbReference type="PANTHER" id="PTHR15067:SF4">
    <property type="entry name" value="E3 UBIQUITIN-PROTEIN LIGASE RNF8"/>
    <property type="match status" value="1"/>
</dbReference>
<dbReference type="Pfam" id="PF00498">
    <property type="entry name" value="FHA"/>
    <property type="match status" value="1"/>
</dbReference>
<dbReference type="Pfam" id="PF13920">
    <property type="entry name" value="zf-C3HC4_3"/>
    <property type="match status" value="1"/>
</dbReference>
<dbReference type="PIRSF" id="PIRSF037950">
    <property type="entry name" value="E3_ubiquit_lig_RNF8"/>
    <property type="match status" value="1"/>
</dbReference>
<dbReference type="SMART" id="SM00240">
    <property type="entry name" value="FHA"/>
    <property type="match status" value="1"/>
</dbReference>
<dbReference type="SMART" id="SM00184">
    <property type="entry name" value="RING"/>
    <property type="match status" value="1"/>
</dbReference>
<dbReference type="SUPFAM" id="SSF57850">
    <property type="entry name" value="RING/U-box"/>
    <property type="match status" value="1"/>
</dbReference>
<dbReference type="SUPFAM" id="SSF49879">
    <property type="entry name" value="SMAD/FHA domain"/>
    <property type="match status" value="1"/>
</dbReference>
<dbReference type="PROSITE" id="PS50006">
    <property type="entry name" value="FHA_DOMAIN"/>
    <property type="match status" value="1"/>
</dbReference>
<dbReference type="PROSITE" id="PS00518">
    <property type="entry name" value="ZF_RING_1"/>
    <property type="match status" value="1"/>
</dbReference>
<dbReference type="PROSITE" id="PS50089">
    <property type="entry name" value="ZF_RING_2"/>
    <property type="match status" value="1"/>
</dbReference>
<name>RNF8_PONAB</name>
<organism>
    <name type="scientific">Pongo abelii</name>
    <name type="common">Sumatran orangutan</name>
    <name type="synonym">Pongo pygmaeus abelii</name>
    <dbReference type="NCBI Taxonomy" id="9601"/>
    <lineage>
        <taxon>Eukaryota</taxon>
        <taxon>Metazoa</taxon>
        <taxon>Chordata</taxon>
        <taxon>Craniata</taxon>
        <taxon>Vertebrata</taxon>
        <taxon>Euteleostomi</taxon>
        <taxon>Mammalia</taxon>
        <taxon>Eutheria</taxon>
        <taxon>Euarchontoglires</taxon>
        <taxon>Primates</taxon>
        <taxon>Haplorrhini</taxon>
        <taxon>Catarrhini</taxon>
        <taxon>Hominidae</taxon>
        <taxon>Pongo</taxon>
    </lineage>
</organism>
<keyword id="KW-0131">Cell cycle</keyword>
<keyword id="KW-0132">Cell division</keyword>
<keyword id="KW-0156">Chromatin regulator</keyword>
<keyword id="KW-0158">Chromosome</keyword>
<keyword id="KW-0963">Cytoplasm</keyword>
<keyword id="KW-0227">DNA damage</keyword>
<keyword id="KW-0234">DNA repair</keyword>
<keyword id="KW-0479">Metal-binding</keyword>
<keyword id="KW-0498">Mitosis</keyword>
<keyword id="KW-0539">Nucleus</keyword>
<keyword id="KW-0597">Phosphoprotein</keyword>
<keyword id="KW-1185">Reference proteome</keyword>
<keyword id="KW-0779">Telomere</keyword>
<keyword id="KW-0808">Transferase</keyword>
<keyword id="KW-0832">Ubl conjugation</keyword>
<keyword id="KW-0833">Ubl conjugation pathway</keyword>
<keyword id="KW-0862">Zinc</keyword>
<keyword id="KW-0863">Zinc-finger</keyword>
<proteinExistence type="evidence at transcript level"/>